<dbReference type="EMBL" id="CR859827">
    <property type="protein sequence ID" value="CAH91984.1"/>
    <property type="molecule type" value="mRNA"/>
</dbReference>
<dbReference type="RefSeq" id="NP_001127491.1">
    <property type="nucleotide sequence ID" value="NM_001134019.1"/>
</dbReference>
<dbReference type="SMR" id="Q5R8C6"/>
<dbReference type="FunCoup" id="Q5R8C6">
    <property type="interactions" value="179"/>
</dbReference>
<dbReference type="STRING" id="9601.ENSPPYP00000012561"/>
<dbReference type="Ensembl" id="ENSPPYT00000013057.2">
    <property type="protein sequence ID" value="ENSPPYP00000012561.2"/>
    <property type="gene ID" value="ENSPPYG00000011243.3"/>
</dbReference>
<dbReference type="GeneID" id="100174566"/>
<dbReference type="KEGG" id="pon:100174566"/>
<dbReference type="CTD" id="50861"/>
<dbReference type="eggNOG" id="KOG1280">
    <property type="taxonomic scope" value="Eukaryota"/>
</dbReference>
<dbReference type="GeneTree" id="ENSGT01030000234597"/>
<dbReference type="InParanoid" id="Q5R8C6"/>
<dbReference type="OMA" id="MPTAYKE"/>
<dbReference type="OrthoDB" id="5986631at2759"/>
<dbReference type="Proteomes" id="UP000001595">
    <property type="component" value="Chromosome 20"/>
</dbReference>
<dbReference type="GO" id="GO:0005829">
    <property type="term" value="C:cytosol"/>
    <property type="evidence" value="ECO:0000250"/>
    <property type="project" value="UniProtKB"/>
</dbReference>
<dbReference type="GO" id="GO:0005794">
    <property type="term" value="C:Golgi apparatus"/>
    <property type="evidence" value="ECO:0007669"/>
    <property type="project" value="UniProtKB-SubCell"/>
</dbReference>
<dbReference type="GO" id="GO:0030426">
    <property type="term" value="C:growth cone"/>
    <property type="evidence" value="ECO:0007669"/>
    <property type="project" value="UniProtKB-SubCell"/>
</dbReference>
<dbReference type="GO" id="GO:0019904">
    <property type="term" value="F:protein domain specific binding"/>
    <property type="evidence" value="ECO:0007669"/>
    <property type="project" value="Ensembl"/>
</dbReference>
<dbReference type="GO" id="GO:0015631">
    <property type="term" value="F:tubulin binding"/>
    <property type="evidence" value="ECO:0007669"/>
    <property type="project" value="TreeGrafter"/>
</dbReference>
<dbReference type="GO" id="GO:0001835">
    <property type="term" value="P:blastocyst hatching"/>
    <property type="evidence" value="ECO:0007669"/>
    <property type="project" value="Ensembl"/>
</dbReference>
<dbReference type="GO" id="GO:0031122">
    <property type="term" value="P:cytoplasmic microtubule organization"/>
    <property type="evidence" value="ECO:0007669"/>
    <property type="project" value="Ensembl"/>
</dbReference>
<dbReference type="GO" id="GO:0007019">
    <property type="term" value="P:microtubule depolymerization"/>
    <property type="evidence" value="ECO:0007669"/>
    <property type="project" value="TreeGrafter"/>
</dbReference>
<dbReference type="GO" id="GO:0010977">
    <property type="term" value="P:negative regulation of neuron projection development"/>
    <property type="evidence" value="ECO:0007669"/>
    <property type="project" value="Ensembl"/>
</dbReference>
<dbReference type="GO" id="GO:0035021">
    <property type="term" value="P:negative regulation of Rac protein signal transduction"/>
    <property type="evidence" value="ECO:0007669"/>
    <property type="project" value="Ensembl"/>
</dbReference>
<dbReference type="GO" id="GO:0031175">
    <property type="term" value="P:neuron projection development"/>
    <property type="evidence" value="ECO:0007669"/>
    <property type="project" value="TreeGrafter"/>
</dbReference>
<dbReference type="GO" id="GO:0031110">
    <property type="term" value="P:regulation of microtubule polymerization or depolymerization"/>
    <property type="evidence" value="ECO:0007669"/>
    <property type="project" value="InterPro"/>
</dbReference>
<dbReference type="Gene3D" id="6.10.280.30">
    <property type="match status" value="1"/>
</dbReference>
<dbReference type="InterPro" id="IPR030514">
    <property type="entry name" value="Stathmin_CS"/>
</dbReference>
<dbReference type="InterPro" id="IPR000956">
    <property type="entry name" value="Stathmin_fam"/>
</dbReference>
<dbReference type="InterPro" id="IPR036002">
    <property type="entry name" value="Stathmin_sf"/>
</dbReference>
<dbReference type="PANTHER" id="PTHR10104">
    <property type="entry name" value="STATHMIN"/>
    <property type="match status" value="1"/>
</dbReference>
<dbReference type="PANTHER" id="PTHR10104:SF17">
    <property type="entry name" value="STATHMIN-3"/>
    <property type="match status" value="1"/>
</dbReference>
<dbReference type="Pfam" id="PF00836">
    <property type="entry name" value="Stathmin"/>
    <property type="match status" value="1"/>
</dbReference>
<dbReference type="PIRSF" id="PIRSF002285">
    <property type="entry name" value="Stathmin"/>
    <property type="match status" value="1"/>
</dbReference>
<dbReference type="PRINTS" id="PR00345">
    <property type="entry name" value="STATHMIN"/>
</dbReference>
<dbReference type="SUPFAM" id="SSF101494">
    <property type="entry name" value="Stathmin"/>
    <property type="match status" value="1"/>
</dbReference>
<dbReference type="PROSITE" id="PS00563">
    <property type="entry name" value="STATHMIN_1"/>
    <property type="match status" value="1"/>
</dbReference>
<dbReference type="PROSITE" id="PS01041">
    <property type="entry name" value="STATHMIN_2"/>
    <property type="match status" value="1"/>
</dbReference>
<dbReference type="PROSITE" id="PS51663">
    <property type="entry name" value="STATHMIN_3"/>
    <property type="match status" value="1"/>
</dbReference>
<feature type="chain" id="PRO_0000294078" description="Stathmin-3">
    <location>
        <begin position="1"/>
        <end position="180"/>
    </location>
</feature>
<feature type="domain" description="SLD" evidence="5">
    <location>
        <begin position="38"/>
        <end position="180"/>
    </location>
</feature>
<feature type="region of interest" description="Disordered" evidence="6">
    <location>
        <begin position="59"/>
        <end position="82"/>
    </location>
</feature>
<feature type="coiled-coil region" evidence="4">
    <location>
        <begin position="76"/>
        <end position="179"/>
    </location>
</feature>
<feature type="compositionally biased region" description="Low complexity" evidence="6">
    <location>
        <begin position="60"/>
        <end position="74"/>
    </location>
</feature>
<feature type="modified residue" description="Phosphoserine" evidence="2">
    <location>
        <position position="50"/>
    </location>
</feature>
<feature type="modified residue" description="Phosphoserine" evidence="2">
    <location>
        <position position="60"/>
    </location>
</feature>
<feature type="modified residue" description="Phosphoserine" evidence="2">
    <location>
        <position position="65"/>
    </location>
</feature>
<feature type="modified residue" description="Phosphoserine" evidence="2">
    <location>
        <position position="68"/>
    </location>
</feature>
<feature type="modified residue" description="Phosphoserine" evidence="2">
    <location>
        <position position="72"/>
    </location>
</feature>
<feature type="modified residue" description="Phosphoserine" evidence="2">
    <location>
        <position position="73"/>
    </location>
</feature>
<feature type="modified residue" description="Phosphoserine" evidence="3">
    <location>
        <position position="81"/>
    </location>
</feature>
<feature type="lipid moiety-binding region" description="S-palmitoyl cysteine" evidence="1">
    <location>
        <position position="22"/>
    </location>
</feature>
<feature type="lipid moiety-binding region" description="S-palmitoyl cysteine" evidence="1">
    <location>
        <position position="24"/>
    </location>
</feature>
<gene>
    <name type="primary">STMN3</name>
</gene>
<evidence type="ECO:0000250" key="1"/>
<evidence type="ECO:0000250" key="2">
    <source>
        <dbReference type="UniProtKB" id="O70166"/>
    </source>
</evidence>
<evidence type="ECO:0000250" key="3">
    <source>
        <dbReference type="UniProtKB" id="Q9JHU6"/>
    </source>
</evidence>
<evidence type="ECO:0000255" key="4"/>
<evidence type="ECO:0000255" key="5">
    <source>
        <dbReference type="PROSITE-ProRule" id="PRU00998"/>
    </source>
</evidence>
<evidence type="ECO:0000256" key="6">
    <source>
        <dbReference type="SAM" id="MobiDB-lite"/>
    </source>
</evidence>
<evidence type="ECO:0000305" key="7"/>
<comment type="function">
    <text evidence="1">Exhibits microtubule-destabilizing activity, which is antagonized by STAT3.</text>
</comment>
<comment type="subunit">
    <text evidence="1 3">Interacts with STAT3. Interacts with CLU (secreted form); this interaction may act as an important modulator during neuronal differentiation (By similarity).</text>
</comment>
<comment type="subcellular location">
    <subcellularLocation>
        <location evidence="1">Golgi apparatus</location>
    </subcellularLocation>
    <subcellularLocation>
        <location evidence="1">Cell projection</location>
        <location evidence="1">Growth cone</location>
    </subcellularLocation>
    <subcellularLocation>
        <location evidence="1">Cell projection</location>
        <location evidence="1">Axon</location>
    </subcellularLocation>
    <subcellularLocation>
        <location evidence="3">Cytoplasm</location>
        <location evidence="3">Cytosol</location>
    </subcellularLocation>
</comment>
<comment type="PTM">
    <text evidence="1">N-terminal palmitoylation promotes specific anchoring to the cytosolic leaflet of Golgi membranes and subsequent vesicular trafficking along dendrites and axons. Neuronal Stathmins are substrates for palmitoyltransferases ZDHHC3, ZDHHC7 and ZDHHC15 (By similarity).</text>
</comment>
<comment type="similarity">
    <text evidence="7">Belongs to the stathmin family.</text>
</comment>
<name>STMN3_PONAB</name>
<sequence>MASTISAYKEKMKELSVLSLICSCFYTQPHPNTVYQYGDMEVKQLDKRASGQSFEVILKSPSDLSPESPMLSSPPKKKDTSLEELQKRLEAAEERRKTQEAQVLKQLAERREHEREVLHKALEENNNFSRQAEEKLNYKMELSKEIREAHLAALRERLREKELHAAEVRRNKEQREEMSG</sequence>
<keyword id="KW-0966">Cell projection</keyword>
<keyword id="KW-0175">Coiled coil</keyword>
<keyword id="KW-0963">Cytoplasm</keyword>
<keyword id="KW-0333">Golgi apparatus</keyword>
<keyword id="KW-0449">Lipoprotein</keyword>
<keyword id="KW-0564">Palmitate</keyword>
<keyword id="KW-0597">Phosphoprotein</keyword>
<keyword id="KW-1185">Reference proteome</keyword>
<proteinExistence type="evidence at transcript level"/>
<protein>
    <recommendedName>
        <fullName>Stathmin-3</fullName>
    </recommendedName>
</protein>
<organism>
    <name type="scientific">Pongo abelii</name>
    <name type="common">Sumatran orangutan</name>
    <name type="synonym">Pongo pygmaeus abelii</name>
    <dbReference type="NCBI Taxonomy" id="9601"/>
    <lineage>
        <taxon>Eukaryota</taxon>
        <taxon>Metazoa</taxon>
        <taxon>Chordata</taxon>
        <taxon>Craniata</taxon>
        <taxon>Vertebrata</taxon>
        <taxon>Euteleostomi</taxon>
        <taxon>Mammalia</taxon>
        <taxon>Eutheria</taxon>
        <taxon>Euarchontoglires</taxon>
        <taxon>Primates</taxon>
        <taxon>Haplorrhini</taxon>
        <taxon>Catarrhini</taxon>
        <taxon>Hominidae</taxon>
        <taxon>Pongo</taxon>
    </lineage>
</organism>
<accession>Q5R8C6</accession>
<reference key="1">
    <citation type="submission" date="2004-11" db="EMBL/GenBank/DDBJ databases">
        <authorList>
            <consortium name="The German cDNA consortium"/>
        </authorList>
    </citation>
    <scope>NUCLEOTIDE SEQUENCE [LARGE SCALE MRNA]</scope>
    <source>
        <tissue>Kidney</tissue>
    </source>
</reference>